<organism>
    <name type="scientific">Sinorhizobium medicae (strain WSM419)</name>
    <name type="common">Ensifer medicae</name>
    <dbReference type="NCBI Taxonomy" id="366394"/>
    <lineage>
        <taxon>Bacteria</taxon>
        <taxon>Pseudomonadati</taxon>
        <taxon>Pseudomonadota</taxon>
        <taxon>Alphaproteobacteria</taxon>
        <taxon>Hyphomicrobiales</taxon>
        <taxon>Rhizobiaceae</taxon>
        <taxon>Sinorhizobium/Ensifer group</taxon>
        <taxon>Sinorhizobium</taxon>
    </lineage>
</organism>
<comment type="function">
    <text evidence="1">Responsible for the transport of dicarboxylates such as succinate, fumarate, and malate from the periplasm across the membrane.</text>
</comment>
<comment type="subcellular location">
    <subcellularLocation>
        <location evidence="1">Cell inner membrane</location>
        <topology evidence="1">Multi-pass membrane protein</topology>
    </subcellularLocation>
</comment>
<comment type="similarity">
    <text evidence="1">Belongs to the dicarboxylate/amino acid:cation symporter (DAACS) (TC 2.A.23) family.</text>
</comment>
<name>DCTA_SINMW</name>
<gene>
    <name evidence="1" type="primary">dctA</name>
    <name type="ordered locus">Smed_4178</name>
</gene>
<evidence type="ECO:0000255" key="1">
    <source>
        <dbReference type="HAMAP-Rule" id="MF_01300"/>
    </source>
</evidence>
<protein>
    <recommendedName>
        <fullName evidence="1">C4-dicarboxylate transport protein</fullName>
    </recommendedName>
</protein>
<sequence>MLPDWACHVEDIMIIEHSAEVRGKTPLYRHLYVQVLAAIAAGILLGHFYPDIGTQLKPLGDAFIRLVKMIIAPVIFLTVATGIAGMTDLAKVGRVAGKAMIYFLAFSTLALLVGLVVANLVQPGAGMHIDPASLDAKAVATYAQKAHEQSITGFLMNIIPTTLVGAFAEGDILQVLFISVLFGISLAIVGKKAEPVVDFLQALTLPIFRLVAILMKAAPIGAFGAMAFTIGKYGIASIANLAMLIGTFYLTSFLFVFVVLGAVARYNGFSILSLVRYIKEELLLVLGTSSSEAALPGLMNKMEKAGCKRSVVGLVIPTGYSFNLDGTNIYMTLAALFIAQATDTPLSYGDQILLLLVAMLSSKGAAGITGAGFITLAATLSVVPSVPVAGMALILGIDRFMSECRALTNFVGNAVATIVVAKWEGELDQAQLSAALGGEMQVETIPAVVVQPAE</sequence>
<geneLocation type="plasmid">
    <name>pSMED01</name>
</geneLocation>
<keyword id="KW-0997">Cell inner membrane</keyword>
<keyword id="KW-1003">Cell membrane</keyword>
<keyword id="KW-0472">Membrane</keyword>
<keyword id="KW-0614">Plasmid</keyword>
<keyword id="KW-0769">Symport</keyword>
<keyword id="KW-0812">Transmembrane</keyword>
<keyword id="KW-1133">Transmembrane helix</keyword>
<keyword id="KW-0813">Transport</keyword>
<accession>A6UH53</accession>
<proteinExistence type="inferred from homology"/>
<dbReference type="EMBL" id="CP000739">
    <property type="protein sequence ID" value="ABR62983.1"/>
    <property type="molecule type" value="Genomic_DNA"/>
</dbReference>
<dbReference type="RefSeq" id="YP_001312916.1">
    <property type="nucleotide sequence ID" value="NC_009620.1"/>
</dbReference>
<dbReference type="SMR" id="A6UH53"/>
<dbReference type="KEGG" id="smd:Smed_4178"/>
<dbReference type="PATRIC" id="fig|366394.8.peg.637"/>
<dbReference type="HOGENOM" id="CLU_019375_7_0_5"/>
<dbReference type="OrthoDB" id="9766690at2"/>
<dbReference type="Proteomes" id="UP000001108">
    <property type="component" value="Plasmid pSMED01"/>
</dbReference>
<dbReference type="GO" id="GO:0005886">
    <property type="term" value="C:plasma membrane"/>
    <property type="evidence" value="ECO:0007669"/>
    <property type="project" value="UniProtKB-SubCell"/>
</dbReference>
<dbReference type="GO" id="GO:0015138">
    <property type="term" value="F:fumarate transmembrane transporter activity"/>
    <property type="evidence" value="ECO:0007669"/>
    <property type="project" value="TreeGrafter"/>
</dbReference>
<dbReference type="GO" id="GO:0015366">
    <property type="term" value="F:malate:proton symporter activity"/>
    <property type="evidence" value="ECO:0007669"/>
    <property type="project" value="TreeGrafter"/>
</dbReference>
<dbReference type="GO" id="GO:0015141">
    <property type="term" value="F:succinate transmembrane transporter activity"/>
    <property type="evidence" value="ECO:0007669"/>
    <property type="project" value="TreeGrafter"/>
</dbReference>
<dbReference type="GO" id="GO:0070778">
    <property type="term" value="P:L-aspartate transmembrane transport"/>
    <property type="evidence" value="ECO:0007669"/>
    <property type="project" value="TreeGrafter"/>
</dbReference>
<dbReference type="FunFam" id="1.10.3860.10:FF:000001">
    <property type="entry name" value="C4-dicarboxylate transport protein"/>
    <property type="match status" value="1"/>
</dbReference>
<dbReference type="Gene3D" id="1.10.3860.10">
    <property type="entry name" value="Sodium:dicarboxylate symporter"/>
    <property type="match status" value="1"/>
</dbReference>
<dbReference type="HAMAP" id="MF_01300">
    <property type="entry name" value="C4_dicarb_transport"/>
    <property type="match status" value="1"/>
</dbReference>
<dbReference type="InterPro" id="IPR023954">
    <property type="entry name" value="C4_dicarb_transport"/>
</dbReference>
<dbReference type="InterPro" id="IPR001991">
    <property type="entry name" value="Na-dicarboxylate_symporter"/>
</dbReference>
<dbReference type="InterPro" id="IPR018107">
    <property type="entry name" value="Na-dicarboxylate_symporter_CS"/>
</dbReference>
<dbReference type="InterPro" id="IPR036458">
    <property type="entry name" value="Na:dicarbo_symporter_sf"/>
</dbReference>
<dbReference type="NCBIfam" id="NF002461">
    <property type="entry name" value="PRK01663.1"/>
    <property type="match status" value="1"/>
</dbReference>
<dbReference type="NCBIfam" id="NF009587">
    <property type="entry name" value="PRK13027.1"/>
    <property type="match status" value="1"/>
</dbReference>
<dbReference type="PANTHER" id="PTHR42865:SF1">
    <property type="entry name" value="AEROBIC C4-DICARBOXYLATE TRANSPORT PROTEIN"/>
    <property type="match status" value="1"/>
</dbReference>
<dbReference type="PANTHER" id="PTHR42865">
    <property type="entry name" value="PROTON/GLUTAMATE-ASPARTATE SYMPORTER"/>
    <property type="match status" value="1"/>
</dbReference>
<dbReference type="Pfam" id="PF00375">
    <property type="entry name" value="SDF"/>
    <property type="match status" value="1"/>
</dbReference>
<dbReference type="PRINTS" id="PR00173">
    <property type="entry name" value="EDTRNSPORT"/>
</dbReference>
<dbReference type="SUPFAM" id="SSF118215">
    <property type="entry name" value="Proton glutamate symport protein"/>
    <property type="match status" value="1"/>
</dbReference>
<dbReference type="PROSITE" id="PS00713">
    <property type="entry name" value="NA_DICARBOXYL_SYMP_1"/>
    <property type="match status" value="1"/>
</dbReference>
<dbReference type="PROSITE" id="PS00714">
    <property type="entry name" value="NA_DICARBOXYL_SYMP_2"/>
    <property type="match status" value="1"/>
</dbReference>
<reference key="1">
    <citation type="submission" date="2007-06" db="EMBL/GenBank/DDBJ databases">
        <title>Complete sequence of Sinorhizobium medicae WSM419 plasmid pSMED01.</title>
        <authorList>
            <consortium name="US DOE Joint Genome Institute"/>
            <person name="Copeland A."/>
            <person name="Lucas S."/>
            <person name="Lapidus A."/>
            <person name="Barry K."/>
            <person name="Glavina del Rio T."/>
            <person name="Dalin E."/>
            <person name="Tice H."/>
            <person name="Pitluck S."/>
            <person name="Chain P."/>
            <person name="Malfatti S."/>
            <person name="Shin M."/>
            <person name="Vergez L."/>
            <person name="Schmutz J."/>
            <person name="Larimer F."/>
            <person name="Land M."/>
            <person name="Hauser L."/>
            <person name="Kyrpides N."/>
            <person name="Mikhailova N."/>
            <person name="Reeve W.G."/>
            <person name="Richardson P."/>
        </authorList>
    </citation>
    <scope>NUCLEOTIDE SEQUENCE [LARGE SCALE GENOMIC DNA]</scope>
    <source>
        <strain>WSM419</strain>
    </source>
</reference>
<feature type="chain" id="PRO_0000322003" description="C4-dicarboxylate transport protein">
    <location>
        <begin position="1"/>
        <end position="454"/>
    </location>
</feature>
<feature type="transmembrane region" description="Helical" evidence="1">
    <location>
        <begin position="33"/>
        <end position="53"/>
    </location>
</feature>
<feature type="transmembrane region" description="Helical" evidence="1">
    <location>
        <begin position="66"/>
        <end position="86"/>
    </location>
</feature>
<feature type="transmembrane region" description="Helical" evidence="1">
    <location>
        <begin position="101"/>
        <end position="121"/>
    </location>
</feature>
<feature type="transmembrane region" description="Helical" evidence="1">
    <location>
        <begin position="148"/>
        <end position="168"/>
    </location>
</feature>
<feature type="transmembrane region" description="Helical" evidence="1">
    <location>
        <begin position="170"/>
        <end position="190"/>
    </location>
</feature>
<feature type="transmembrane region" description="Helical" evidence="1">
    <location>
        <begin position="210"/>
        <end position="230"/>
    </location>
</feature>
<feature type="transmembrane region" description="Helical" evidence="1">
    <location>
        <begin position="243"/>
        <end position="263"/>
    </location>
</feature>
<feature type="transmembrane region" description="Helical" evidence="1">
    <location>
        <begin position="354"/>
        <end position="374"/>
    </location>
</feature>
<feature type="transmembrane region" description="Helical" evidence="1">
    <location>
        <begin position="377"/>
        <end position="397"/>
    </location>
</feature>